<comment type="similarity">
    <text evidence="1">Belongs to the UPF0102 family.</text>
</comment>
<sequence length="121" mass="13919">MAEHNELGKAGENAAVAYLEEHGYLIRHRNWRKGHFELDIVAAKENELVIVEVKTRSNTLFAQPEEAVDLPKIKRTVRAADAYMKLFQIDVPVRFDIITVIGENGNFRIDHIKEAFYPPLF</sequence>
<evidence type="ECO:0000255" key="1">
    <source>
        <dbReference type="HAMAP-Rule" id="MF_00048"/>
    </source>
</evidence>
<reference key="1">
    <citation type="journal article" date="2003" name="Science">
        <title>A genomic view of the human-Bacteroides thetaiotaomicron symbiosis.</title>
        <authorList>
            <person name="Xu J."/>
            <person name="Bjursell M.K."/>
            <person name="Himrod J."/>
            <person name="Deng S."/>
            <person name="Carmichael L.K."/>
            <person name="Chiang H.C."/>
            <person name="Hooper L.V."/>
            <person name="Gordon J.I."/>
        </authorList>
    </citation>
    <scope>NUCLEOTIDE SEQUENCE [LARGE SCALE GENOMIC DNA]</scope>
    <source>
        <strain>ATCC 29148 / DSM 2079 / JCM 5827 / CCUG 10774 / NCTC 10582 / VPI-5482 / E50</strain>
    </source>
</reference>
<accession>Q8A5K3</accession>
<feature type="chain" id="PRO_0000167333" description="UPF0102 protein BT_2236">
    <location>
        <begin position="1"/>
        <end position="121"/>
    </location>
</feature>
<organism>
    <name type="scientific">Bacteroides thetaiotaomicron (strain ATCC 29148 / DSM 2079 / JCM 5827 / CCUG 10774 / NCTC 10582 / VPI-5482 / E50)</name>
    <dbReference type="NCBI Taxonomy" id="226186"/>
    <lineage>
        <taxon>Bacteria</taxon>
        <taxon>Pseudomonadati</taxon>
        <taxon>Bacteroidota</taxon>
        <taxon>Bacteroidia</taxon>
        <taxon>Bacteroidales</taxon>
        <taxon>Bacteroidaceae</taxon>
        <taxon>Bacteroides</taxon>
    </lineage>
</organism>
<proteinExistence type="inferred from homology"/>
<gene>
    <name type="ordered locus">BT_2236</name>
</gene>
<keyword id="KW-1185">Reference proteome</keyword>
<name>Y2236_BACTN</name>
<protein>
    <recommendedName>
        <fullName evidence="1">UPF0102 protein BT_2236</fullName>
    </recommendedName>
</protein>
<dbReference type="EMBL" id="AE015928">
    <property type="protein sequence ID" value="AAO77343.1"/>
    <property type="molecule type" value="Genomic_DNA"/>
</dbReference>
<dbReference type="RefSeq" id="NP_811149.1">
    <property type="nucleotide sequence ID" value="NC_004663.1"/>
</dbReference>
<dbReference type="RefSeq" id="WP_008764002.1">
    <property type="nucleotide sequence ID" value="NZ_UYXG01000020.1"/>
</dbReference>
<dbReference type="SMR" id="Q8A5K3"/>
<dbReference type="STRING" id="226186.BT_2236"/>
<dbReference type="PaxDb" id="226186-BT_2236"/>
<dbReference type="DNASU" id="1072535"/>
<dbReference type="EnsemblBacteria" id="AAO77343">
    <property type="protein sequence ID" value="AAO77343"/>
    <property type="gene ID" value="BT_2236"/>
</dbReference>
<dbReference type="KEGG" id="bth:BT_2236"/>
<dbReference type="PATRIC" id="fig|226186.12.peg.2301"/>
<dbReference type="eggNOG" id="COG0792">
    <property type="taxonomic scope" value="Bacteria"/>
</dbReference>
<dbReference type="HOGENOM" id="CLU_115353_2_1_10"/>
<dbReference type="InParanoid" id="Q8A5K3"/>
<dbReference type="OrthoDB" id="9802516at2"/>
<dbReference type="Proteomes" id="UP000001414">
    <property type="component" value="Chromosome"/>
</dbReference>
<dbReference type="GO" id="GO:0003676">
    <property type="term" value="F:nucleic acid binding"/>
    <property type="evidence" value="ECO:0007669"/>
    <property type="project" value="InterPro"/>
</dbReference>
<dbReference type="CDD" id="cd20736">
    <property type="entry name" value="PoNe_Nuclease"/>
    <property type="match status" value="1"/>
</dbReference>
<dbReference type="Gene3D" id="3.40.1350.10">
    <property type="match status" value="1"/>
</dbReference>
<dbReference type="HAMAP" id="MF_00048">
    <property type="entry name" value="UPF0102"/>
    <property type="match status" value="1"/>
</dbReference>
<dbReference type="InterPro" id="IPR011335">
    <property type="entry name" value="Restrct_endonuc-II-like"/>
</dbReference>
<dbReference type="InterPro" id="IPR011856">
    <property type="entry name" value="tRNA_endonuc-like_dom_sf"/>
</dbReference>
<dbReference type="InterPro" id="IPR003509">
    <property type="entry name" value="UPF0102_YraN-like"/>
</dbReference>
<dbReference type="PANTHER" id="PTHR34039">
    <property type="entry name" value="UPF0102 PROTEIN YRAN"/>
    <property type="match status" value="1"/>
</dbReference>
<dbReference type="PANTHER" id="PTHR34039:SF1">
    <property type="entry name" value="UPF0102 PROTEIN YRAN"/>
    <property type="match status" value="1"/>
</dbReference>
<dbReference type="Pfam" id="PF02021">
    <property type="entry name" value="UPF0102"/>
    <property type="match status" value="1"/>
</dbReference>
<dbReference type="SUPFAM" id="SSF52980">
    <property type="entry name" value="Restriction endonuclease-like"/>
    <property type="match status" value="1"/>
</dbReference>